<reference key="1">
    <citation type="submission" date="2005-11" db="EMBL/GenBank/DDBJ databases">
        <title>The nectin-like proteins: candidate cell adhesion molecules to mediate axo-glial interactions.</title>
        <authorList>
            <person name="Maurel P."/>
            <person name="Einheber S."/>
            <person name="Rubin M.B."/>
            <person name="Galinska J."/>
            <person name="Thaker P."/>
            <person name="Salzer J.L."/>
        </authorList>
    </citation>
    <scope>NUCLEOTIDE SEQUENCE [MRNA]</scope>
    <source>
        <strain>Sprague-Dawley</strain>
    </source>
</reference>
<reference key="2">
    <citation type="submission" date="2007-09" db="UniProtKB">
        <authorList>
            <person name="Lubec G."/>
            <person name="Kang S.U."/>
            <person name="Lubec S."/>
        </authorList>
    </citation>
    <scope>PROTEIN SEQUENCE OF 46-73; 77-85; 133-157; 177-187; 192-257 AND 353-383</scope>
    <scope>IDENTIFICATION BY MASS SPECTROMETRY</scope>
    <source>
        <strain>Sprague-Dawley</strain>
        <tissue>Brain</tissue>
    </source>
</reference>
<reference key="3">
    <citation type="journal article" date="2012" name="Nat. Commun.">
        <title>Quantitative maps of protein phosphorylation sites across 14 different rat organs and tissues.</title>
        <authorList>
            <person name="Lundby A."/>
            <person name="Secher A."/>
            <person name="Lage K."/>
            <person name="Nordsborg N.B."/>
            <person name="Dmytriyev A."/>
            <person name="Lundby C."/>
            <person name="Olsen J.V."/>
        </authorList>
    </citation>
    <scope>PHOSPHORYLATION [LARGE SCALE ANALYSIS] AT SER-361</scope>
    <scope>IDENTIFICATION BY MASS SPECTROMETRY [LARGE SCALE ANALYSIS]</scope>
</reference>
<reference key="4">
    <citation type="journal article" date="2013" name="J. Proteome Res.">
        <title>Site-specific glycan-peptide analysis for determination of N-glycoproteome heterogeneity.</title>
        <authorList>
            <person name="Parker B.L."/>
            <person name="Thaysen-Andersen M."/>
            <person name="Solis N."/>
            <person name="Scott N.E."/>
            <person name="Larsen M.R."/>
            <person name="Graham M.E."/>
            <person name="Packer N.H."/>
            <person name="Cordwell S.J."/>
        </authorList>
    </citation>
    <scope>GLYCOSYLATION [LARGE SCALE ANALYSIS] AT ASN-67</scope>
    <scope>IDENTIFICATION BY MASS SPECTROMETRY [LARGE SCALE ANALYSIS]</scope>
    <source>
        <tissue>Brain</tissue>
    </source>
</reference>
<dbReference type="EMBL" id="DQ272745">
    <property type="protein sequence ID" value="ABB85364.1"/>
    <property type="molecule type" value="mRNA"/>
</dbReference>
<dbReference type="RefSeq" id="NP_001040572.1">
    <property type="nucleotide sequence ID" value="NM_001047107.2"/>
</dbReference>
<dbReference type="SMR" id="Q1WIM1"/>
<dbReference type="BioGRID" id="265212">
    <property type="interactions" value="1"/>
</dbReference>
<dbReference type="FunCoup" id="Q1WIM1">
    <property type="interactions" value="1400"/>
</dbReference>
<dbReference type="IntAct" id="Q1WIM1">
    <property type="interactions" value="1"/>
</dbReference>
<dbReference type="MINT" id="Q1WIM1"/>
<dbReference type="STRING" id="10116.ENSRNOP00000026793"/>
<dbReference type="GlyCosmos" id="Q1WIM1">
    <property type="glycosylation" value="4 sites, 4 glycans"/>
</dbReference>
<dbReference type="GlyGen" id="Q1WIM1">
    <property type="glycosylation" value="4 sites, 4 N-linked glycans (2 sites)"/>
</dbReference>
<dbReference type="iPTMnet" id="Q1WIM1"/>
<dbReference type="PhosphoSitePlus" id="Q1WIM1"/>
<dbReference type="SwissPalm" id="Q1WIM1"/>
<dbReference type="PaxDb" id="10116-ENSRNOP00000026793"/>
<dbReference type="ABCD" id="Q1WIM1">
    <property type="antibodies" value="1 sequenced antibody"/>
</dbReference>
<dbReference type="Ensembl" id="ENSRNOT00000026793.7">
    <property type="protein sequence ID" value="ENSRNOP00000026793.6"/>
    <property type="gene ID" value="ENSRNOG00000024243.6"/>
</dbReference>
<dbReference type="GeneID" id="365216"/>
<dbReference type="KEGG" id="rno:365216"/>
<dbReference type="UCSC" id="RGD:1304722">
    <property type="organism name" value="rat"/>
</dbReference>
<dbReference type="AGR" id="RGD:1304722"/>
<dbReference type="CTD" id="199731"/>
<dbReference type="RGD" id="1304722">
    <property type="gene designation" value="Cadm4"/>
</dbReference>
<dbReference type="eggNOG" id="ENOG502RFJZ">
    <property type="taxonomic scope" value="Eukaryota"/>
</dbReference>
<dbReference type="GeneTree" id="ENSGT00940000161223"/>
<dbReference type="InParanoid" id="Q1WIM1"/>
<dbReference type="OMA" id="IQNPVRQ"/>
<dbReference type="OrthoDB" id="10028801at2759"/>
<dbReference type="PhylomeDB" id="Q1WIM1"/>
<dbReference type="PRO" id="PR:Q1WIM1"/>
<dbReference type="Proteomes" id="UP000002494">
    <property type="component" value="Chromosome 1"/>
</dbReference>
<dbReference type="GO" id="GO:0031252">
    <property type="term" value="C:cell leading edge"/>
    <property type="evidence" value="ECO:0000250"/>
    <property type="project" value="UniProtKB"/>
</dbReference>
<dbReference type="GO" id="GO:0044291">
    <property type="term" value="C:cell-cell contact zone"/>
    <property type="evidence" value="ECO:0000250"/>
    <property type="project" value="UniProtKB"/>
</dbReference>
<dbReference type="GO" id="GO:0097060">
    <property type="term" value="C:synaptic membrane"/>
    <property type="evidence" value="ECO:0000314"/>
    <property type="project" value="SynGO"/>
</dbReference>
<dbReference type="GO" id="GO:0019903">
    <property type="term" value="F:protein phosphatase binding"/>
    <property type="evidence" value="ECO:0000266"/>
    <property type="project" value="RGD"/>
</dbReference>
<dbReference type="GO" id="GO:0030971">
    <property type="term" value="F:receptor tyrosine kinase binding"/>
    <property type="evidence" value="ECO:0000266"/>
    <property type="project" value="RGD"/>
</dbReference>
<dbReference type="GO" id="GO:0043183">
    <property type="term" value="F:vascular endothelial growth factor receptor 1 binding"/>
    <property type="evidence" value="ECO:0000266"/>
    <property type="project" value="RGD"/>
</dbReference>
<dbReference type="GO" id="GO:0043184">
    <property type="term" value="F:vascular endothelial growth factor receptor 2 binding"/>
    <property type="evidence" value="ECO:0000266"/>
    <property type="project" value="RGD"/>
</dbReference>
<dbReference type="GO" id="GO:0007156">
    <property type="term" value="P:homophilic cell adhesion via plasma membrane adhesion molecules"/>
    <property type="evidence" value="ECO:0000318"/>
    <property type="project" value="GO_Central"/>
</dbReference>
<dbReference type="GO" id="GO:0010801">
    <property type="term" value="P:negative regulation of peptidyl-threonine phosphorylation"/>
    <property type="evidence" value="ECO:0000250"/>
    <property type="project" value="UniProtKB"/>
</dbReference>
<dbReference type="GO" id="GO:0050732">
    <property type="term" value="P:negative regulation of peptidyl-tyrosine phosphorylation"/>
    <property type="evidence" value="ECO:0000250"/>
    <property type="project" value="UniProtKB"/>
</dbReference>
<dbReference type="GO" id="GO:0030948">
    <property type="term" value="P:negative regulation of vascular endothelial growth factor receptor signaling pathway"/>
    <property type="evidence" value="ECO:0000250"/>
    <property type="project" value="UniProtKB"/>
</dbReference>
<dbReference type="GO" id="GO:1900747">
    <property type="term" value="P:negative regulation of vascular endothelial growth factor signaling pathway"/>
    <property type="evidence" value="ECO:0000250"/>
    <property type="project" value="UniProtKB"/>
</dbReference>
<dbReference type="GO" id="GO:2000145">
    <property type="term" value="P:regulation of cell motility"/>
    <property type="evidence" value="ECO:0000250"/>
    <property type="project" value="UniProtKB"/>
</dbReference>
<dbReference type="GO" id="GO:0042127">
    <property type="term" value="P:regulation of cell population proliferation"/>
    <property type="evidence" value="ECO:0000250"/>
    <property type="project" value="UniProtKB"/>
</dbReference>
<dbReference type="GO" id="GO:0035020">
    <property type="term" value="P:regulation of Rac protein signal transduction"/>
    <property type="evidence" value="ECO:0000250"/>
    <property type="project" value="UniProtKB"/>
</dbReference>
<dbReference type="GO" id="GO:0061041">
    <property type="term" value="P:regulation of wound healing"/>
    <property type="evidence" value="ECO:0000250"/>
    <property type="project" value="UniProtKB"/>
</dbReference>
<dbReference type="GO" id="GO:0099560">
    <property type="term" value="P:synaptic membrane adhesion"/>
    <property type="evidence" value="ECO:0000314"/>
    <property type="project" value="SynGO"/>
</dbReference>
<dbReference type="CDD" id="cd05885">
    <property type="entry name" value="IgI_2_Necl-4"/>
    <property type="match status" value="1"/>
</dbReference>
<dbReference type="FunFam" id="2.60.40.10:FF:000013">
    <property type="entry name" value="cell adhesion molecule 1 isoform X1"/>
    <property type="match status" value="1"/>
</dbReference>
<dbReference type="FunFam" id="2.60.40.10:FF:000588">
    <property type="entry name" value="Cell adhesion molecule 4"/>
    <property type="match status" value="1"/>
</dbReference>
<dbReference type="FunFam" id="2.60.40.10:FF:000589">
    <property type="entry name" value="cell adhesion molecule 4"/>
    <property type="match status" value="1"/>
</dbReference>
<dbReference type="Gene3D" id="2.60.40.10">
    <property type="entry name" value="Immunoglobulins"/>
    <property type="match status" value="3"/>
</dbReference>
<dbReference type="InterPro" id="IPR013162">
    <property type="entry name" value="CD80_C2-set"/>
</dbReference>
<dbReference type="InterPro" id="IPR007110">
    <property type="entry name" value="Ig-like_dom"/>
</dbReference>
<dbReference type="InterPro" id="IPR036179">
    <property type="entry name" value="Ig-like_dom_sf"/>
</dbReference>
<dbReference type="InterPro" id="IPR013783">
    <property type="entry name" value="Ig-like_fold"/>
</dbReference>
<dbReference type="InterPro" id="IPR003599">
    <property type="entry name" value="Ig_sub"/>
</dbReference>
<dbReference type="InterPro" id="IPR003598">
    <property type="entry name" value="Ig_sub2"/>
</dbReference>
<dbReference type="InterPro" id="IPR013106">
    <property type="entry name" value="Ig_V-set"/>
</dbReference>
<dbReference type="InterPro" id="IPR003585">
    <property type="entry name" value="Neurexin-like"/>
</dbReference>
<dbReference type="PANTHER" id="PTHR45889:SF3">
    <property type="entry name" value="CELL ADHESION MOLECULE 4"/>
    <property type="match status" value="1"/>
</dbReference>
<dbReference type="PANTHER" id="PTHR45889">
    <property type="entry name" value="IG-LIKE DOMAIN-CONTAINING PROTEIN"/>
    <property type="match status" value="1"/>
</dbReference>
<dbReference type="Pfam" id="PF08205">
    <property type="entry name" value="C2-set_2"/>
    <property type="match status" value="1"/>
</dbReference>
<dbReference type="Pfam" id="PF13927">
    <property type="entry name" value="Ig_3"/>
    <property type="match status" value="1"/>
</dbReference>
<dbReference type="Pfam" id="PF07686">
    <property type="entry name" value="V-set"/>
    <property type="match status" value="1"/>
</dbReference>
<dbReference type="SMART" id="SM00294">
    <property type="entry name" value="4.1m"/>
    <property type="match status" value="1"/>
</dbReference>
<dbReference type="SMART" id="SM00409">
    <property type="entry name" value="IG"/>
    <property type="match status" value="3"/>
</dbReference>
<dbReference type="SMART" id="SM00408">
    <property type="entry name" value="IGc2"/>
    <property type="match status" value="2"/>
</dbReference>
<dbReference type="SUPFAM" id="SSF48726">
    <property type="entry name" value="Immunoglobulin"/>
    <property type="match status" value="3"/>
</dbReference>
<dbReference type="PROSITE" id="PS50835">
    <property type="entry name" value="IG_LIKE"/>
    <property type="match status" value="3"/>
</dbReference>
<comment type="function">
    <text evidence="1">Involved in the cell-cell adhesion. Has calcium- and magnesium-independent cell-cell adhesion activity. May have tumor-suppressor activity (By similarity).</text>
</comment>
<comment type="subunit">
    <text evidence="1">Monomer and homodimer.</text>
</comment>
<comment type="subcellular location">
    <subcellularLocation>
        <location evidence="4">Membrane</location>
        <topology evidence="4">Single-pass type I membrane protein</topology>
    </subcellularLocation>
</comment>
<comment type="PTM">
    <text evidence="1">N-glycosylated.</text>
</comment>
<comment type="similarity">
    <text evidence="4">Belongs to the nectin family.</text>
</comment>
<accession>Q1WIM1</accession>
<sequence>MGRARRFQWPLLLLWAAAAGPGTAQEVQTENVTVAEGGVAEITCRLHQYDGSIVVIQNPARQTLFFNGTRALKDERFQLEEFSPRRVRIRLSDARLEDEGGYFCQLYTEDTHHQIATLTVLVAPENPVVEVREQAVEGGEVELSCLVPRSRPAAVLRWYRDRKELKGVSSGQENGKVWSVASTVRFRVDRKDDGGIVICEAQNQALPSGHSKQTQYVLDVQYSPTARIHASQAVVREGDTLVLTCAVTGNPRPNQIRWNRGNESLPERAEALGETLTLPGLVSADNGTYTCEAANKHGHARALYVLVVYDPGAVVEAQTSVPYAIVGGILALLVFLIICVLVGMVWCSVRQKGSYLTHEASGLDEQGEAREAFLNGSDGHKRKEEFFI</sequence>
<gene>
    <name type="primary">Cadm4</name>
    <name type="synonym">Igsf4c</name>
    <name type="synonym">Necl4</name>
</gene>
<organism>
    <name type="scientific">Rattus norvegicus</name>
    <name type="common">Rat</name>
    <dbReference type="NCBI Taxonomy" id="10116"/>
    <lineage>
        <taxon>Eukaryota</taxon>
        <taxon>Metazoa</taxon>
        <taxon>Chordata</taxon>
        <taxon>Craniata</taxon>
        <taxon>Vertebrata</taxon>
        <taxon>Euteleostomi</taxon>
        <taxon>Mammalia</taxon>
        <taxon>Eutheria</taxon>
        <taxon>Euarchontoglires</taxon>
        <taxon>Glires</taxon>
        <taxon>Rodentia</taxon>
        <taxon>Myomorpha</taxon>
        <taxon>Muroidea</taxon>
        <taxon>Muridae</taxon>
        <taxon>Murinae</taxon>
        <taxon>Rattus</taxon>
    </lineage>
</organism>
<proteinExistence type="evidence at protein level"/>
<name>CADM4_RAT</name>
<evidence type="ECO:0000250" key="1"/>
<evidence type="ECO:0000255" key="2"/>
<evidence type="ECO:0000255" key="3">
    <source>
        <dbReference type="PROSITE-ProRule" id="PRU00114"/>
    </source>
</evidence>
<evidence type="ECO:0000305" key="4"/>
<evidence type="ECO:0007744" key="5">
    <source>
    </source>
</evidence>
<evidence type="ECO:0007744" key="6">
    <source>
    </source>
</evidence>
<protein>
    <recommendedName>
        <fullName>Cell adhesion molecule 4</fullName>
    </recommendedName>
    <alternativeName>
        <fullName>Immunoglobulin superfamily member 4C</fullName>
        <shortName>IgSF4C</shortName>
    </alternativeName>
    <alternativeName>
        <fullName>Nectin-like protein 4</fullName>
        <shortName>NECL-4</shortName>
    </alternativeName>
</protein>
<feature type="signal peptide" evidence="2">
    <location>
        <begin position="1"/>
        <end position="20"/>
    </location>
</feature>
<feature type="chain" id="PRO_0000291982" description="Cell adhesion molecule 4">
    <location>
        <begin position="21"/>
        <end position="388"/>
    </location>
</feature>
<feature type="topological domain" description="Extracellular" evidence="2">
    <location>
        <begin position="25"/>
        <end position="324"/>
    </location>
</feature>
<feature type="transmembrane region" description="Helical" evidence="2">
    <location>
        <begin position="325"/>
        <end position="345"/>
    </location>
</feature>
<feature type="topological domain" description="Cytoplasmic" evidence="2">
    <location>
        <begin position="346"/>
        <end position="388"/>
    </location>
</feature>
<feature type="domain" description="Ig-like V-type">
    <location>
        <begin position="21"/>
        <end position="119"/>
    </location>
</feature>
<feature type="domain" description="Ig-like C2-type 1">
    <location>
        <begin position="124"/>
        <end position="219"/>
    </location>
</feature>
<feature type="domain" description="Ig-like C2-type 2">
    <location>
        <begin position="224"/>
        <end position="307"/>
    </location>
</feature>
<feature type="modified residue" description="Phosphoserine" evidence="5">
    <location>
        <position position="361"/>
    </location>
</feature>
<feature type="glycosylation site" description="N-linked (GlcNAc...) asparagine" evidence="2">
    <location>
        <position position="31"/>
    </location>
</feature>
<feature type="glycosylation site" description="N-linked (GlcNAc...) asparagine" evidence="6">
    <location>
        <position position="67"/>
    </location>
</feature>
<feature type="glycosylation site" description="N-linked (GlcNAc...) asparagine" evidence="2">
    <location>
        <position position="286"/>
    </location>
</feature>
<feature type="disulfide bond" evidence="3">
    <location>
        <begin position="44"/>
        <end position="104"/>
    </location>
</feature>
<feature type="disulfide bond" evidence="3">
    <location>
        <begin position="145"/>
        <end position="199"/>
    </location>
</feature>
<feature type="disulfide bond" evidence="3">
    <location>
        <begin position="245"/>
        <end position="291"/>
    </location>
</feature>
<keyword id="KW-0130">Cell adhesion</keyword>
<keyword id="KW-0903">Direct protein sequencing</keyword>
<keyword id="KW-1015">Disulfide bond</keyword>
<keyword id="KW-0325">Glycoprotein</keyword>
<keyword id="KW-0393">Immunoglobulin domain</keyword>
<keyword id="KW-0472">Membrane</keyword>
<keyword id="KW-0597">Phosphoprotein</keyword>
<keyword id="KW-1185">Reference proteome</keyword>
<keyword id="KW-0677">Repeat</keyword>
<keyword id="KW-0732">Signal</keyword>
<keyword id="KW-0812">Transmembrane</keyword>
<keyword id="KW-1133">Transmembrane helix</keyword>
<keyword id="KW-0043">Tumor suppressor</keyword>